<reference key="1">
    <citation type="journal article" date="2003" name="J. Bacteriol.">
        <title>Complete genome sequence of the ammonia-oxidizing bacterium and obligate chemolithoautotroph Nitrosomonas europaea.</title>
        <authorList>
            <person name="Chain P."/>
            <person name="Lamerdin J.E."/>
            <person name="Larimer F.W."/>
            <person name="Regala W."/>
            <person name="Lao V."/>
            <person name="Land M.L."/>
            <person name="Hauser L."/>
            <person name="Hooper A.B."/>
            <person name="Klotz M.G."/>
            <person name="Norton J."/>
            <person name="Sayavedra-Soto L.A."/>
            <person name="Arciero D.M."/>
            <person name="Hommes N.G."/>
            <person name="Whittaker M.M."/>
            <person name="Arp D.J."/>
        </authorList>
    </citation>
    <scope>NUCLEOTIDE SEQUENCE [LARGE SCALE GENOMIC DNA]</scope>
    <source>
        <strain>ATCC 19718 / CIP 103999 / KCTC 2705 / NBRC 14298</strain>
    </source>
</reference>
<organism>
    <name type="scientific">Nitrosomonas europaea (strain ATCC 19718 / CIP 103999 / KCTC 2705 / NBRC 14298)</name>
    <dbReference type="NCBI Taxonomy" id="228410"/>
    <lineage>
        <taxon>Bacteria</taxon>
        <taxon>Pseudomonadati</taxon>
        <taxon>Pseudomonadota</taxon>
        <taxon>Betaproteobacteria</taxon>
        <taxon>Nitrosomonadales</taxon>
        <taxon>Nitrosomonadaceae</taxon>
        <taxon>Nitrosomonas</taxon>
    </lineage>
</organism>
<sequence length="102" mass="11430">MALTKAELTDLLFENIGLNKREAKEIVECFYEEMRAALQNGDGVKLSGFGNFQLRTKPQRPGRNPKTGEEIPISARRVVTFHASQKLKSMVEANYRGESGTN</sequence>
<keyword id="KW-0233">DNA recombination</keyword>
<keyword id="KW-0238">DNA-binding</keyword>
<keyword id="KW-1185">Reference proteome</keyword>
<keyword id="KW-0804">Transcription</keyword>
<keyword id="KW-0805">Transcription regulation</keyword>
<keyword id="KW-0810">Translation regulation</keyword>
<comment type="function">
    <text evidence="1">This protein is one of the two subunits of integration host factor, a specific DNA-binding protein that functions in genetic recombination as well as in transcriptional and translational control.</text>
</comment>
<comment type="subunit">
    <text evidence="1">Heterodimer of an alpha and a beta chain.</text>
</comment>
<comment type="similarity">
    <text evidence="1">Belongs to the bacterial histone-like protein family.</text>
</comment>
<evidence type="ECO:0000255" key="1">
    <source>
        <dbReference type="HAMAP-Rule" id="MF_00380"/>
    </source>
</evidence>
<evidence type="ECO:0000256" key="2">
    <source>
        <dbReference type="SAM" id="MobiDB-lite"/>
    </source>
</evidence>
<gene>
    <name evidence="1" type="primary">ihfA</name>
    <name evidence="1" type="synonym">himA</name>
    <name type="ordered locus">NE0952</name>
</gene>
<protein>
    <recommendedName>
        <fullName evidence="1">Integration host factor subunit alpha</fullName>
        <shortName evidence="1">IHF-alpha</shortName>
    </recommendedName>
</protein>
<proteinExistence type="inferred from homology"/>
<dbReference type="EMBL" id="AL954747">
    <property type="protein sequence ID" value="CAD84863.1"/>
    <property type="molecule type" value="Genomic_DNA"/>
</dbReference>
<dbReference type="RefSeq" id="WP_011111561.1">
    <property type="nucleotide sequence ID" value="NC_004757.1"/>
</dbReference>
<dbReference type="SMR" id="Q82VV7"/>
<dbReference type="STRING" id="228410.NE0952"/>
<dbReference type="GeneID" id="87104144"/>
<dbReference type="KEGG" id="neu:NE0952"/>
<dbReference type="eggNOG" id="COG0776">
    <property type="taxonomic scope" value="Bacteria"/>
</dbReference>
<dbReference type="HOGENOM" id="CLU_105066_1_3_4"/>
<dbReference type="OrthoDB" id="9797747at2"/>
<dbReference type="PhylomeDB" id="Q82VV7"/>
<dbReference type="Proteomes" id="UP000001416">
    <property type="component" value="Chromosome"/>
</dbReference>
<dbReference type="GO" id="GO:0005829">
    <property type="term" value="C:cytosol"/>
    <property type="evidence" value="ECO:0007669"/>
    <property type="project" value="TreeGrafter"/>
</dbReference>
<dbReference type="GO" id="GO:0003677">
    <property type="term" value="F:DNA binding"/>
    <property type="evidence" value="ECO:0007669"/>
    <property type="project" value="UniProtKB-UniRule"/>
</dbReference>
<dbReference type="GO" id="GO:0030527">
    <property type="term" value="F:structural constituent of chromatin"/>
    <property type="evidence" value="ECO:0007669"/>
    <property type="project" value="InterPro"/>
</dbReference>
<dbReference type="GO" id="GO:0006310">
    <property type="term" value="P:DNA recombination"/>
    <property type="evidence" value="ECO:0007669"/>
    <property type="project" value="UniProtKB-UniRule"/>
</dbReference>
<dbReference type="GO" id="GO:0009893">
    <property type="term" value="P:positive regulation of metabolic process"/>
    <property type="evidence" value="ECO:0007669"/>
    <property type="project" value="UniProtKB-ARBA"/>
</dbReference>
<dbReference type="GO" id="GO:0006355">
    <property type="term" value="P:regulation of DNA-templated transcription"/>
    <property type="evidence" value="ECO:0007669"/>
    <property type="project" value="UniProtKB-UniRule"/>
</dbReference>
<dbReference type="GO" id="GO:0006417">
    <property type="term" value="P:regulation of translation"/>
    <property type="evidence" value="ECO:0007669"/>
    <property type="project" value="UniProtKB-UniRule"/>
</dbReference>
<dbReference type="CDD" id="cd13835">
    <property type="entry name" value="IHF_A"/>
    <property type="match status" value="1"/>
</dbReference>
<dbReference type="FunFam" id="4.10.520.10:FF:000002">
    <property type="entry name" value="Integration host factor subunit alpha"/>
    <property type="match status" value="1"/>
</dbReference>
<dbReference type="Gene3D" id="4.10.520.10">
    <property type="entry name" value="IHF-like DNA-binding proteins"/>
    <property type="match status" value="1"/>
</dbReference>
<dbReference type="HAMAP" id="MF_00380">
    <property type="entry name" value="IHF_alpha"/>
    <property type="match status" value="1"/>
</dbReference>
<dbReference type="InterPro" id="IPR000119">
    <property type="entry name" value="Hist_DNA-bd"/>
</dbReference>
<dbReference type="InterPro" id="IPR020816">
    <property type="entry name" value="Histone-like_DNA-bd_CS"/>
</dbReference>
<dbReference type="InterPro" id="IPR010992">
    <property type="entry name" value="IHF-like_DNA-bd_dom_sf"/>
</dbReference>
<dbReference type="InterPro" id="IPR005684">
    <property type="entry name" value="IHF_alpha"/>
</dbReference>
<dbReference type="NCBIfam" id="TIGR00987">
    <property type="entry name" value="himA"/>
    <property type="match status" value="1"/>
</dbReference>
<dbReference type="NCBIfam" id="NF001401">
    <property type="entry name" value="PRK00285.1"/>
    <property type="match status" value="1"/>
</dbReference>
<dbReference type="PANTHER" id="PTHR33175">
    <property type="entry name" value="DNA-BINDING PROTEIN HU"/>
    <property type="match status" value="1"/>
</dbReference>
<dbReference type="PANTHER" id="PTHR33175:SF2">
    <property type="entry name" value="INTEGRATION HOST FACTOR SUBUNIT ALPHA"/>
    <property type="match status" value="1"/>
</dbReference>
<dbReference type="Pfam" id="PF00216">
    <property type="entry name" value="Bac_DNA_binding"/>
    <property type="match status" value="1"/>
</dbReference>
<dbReference type="PRINTS" id="PR01727">
    <property type="entry name" value="DNABINDINGHU"/>
</dbReference>
<dbReference type="SMART" id="SM00411">
    <property type="entry name" value="BHL"/>
    <property type="match status" value="1"/>
</dbReference>
<dbReference type="SUPFAM" id="SSF47729">
    <property type="entry name" value="IHF-like DNA-binding proteins"/>
    <property type="match status" value="1"/>
</dbReference>
<dbReference type="PROSITE" id="PS00045">
    <property type="entry name" value="HISTONE_LIKE"/>
    <property type="match status" value="1"/>
</dbReference>
<feature type="chain" id="PRO_0000277749" description="Integration host factor subunit alpha">
    <location>
        <begin position="1"/>
        <end position="102"/>
    </location>
</feature>
<feature type="region of interest" description="Disordered" evidence="2">
    <location>
        <begin position="49"/>
        <end position="70"/>
    </location>
</feature>
<accession>Q82VV7</accession>
<name>IHFA_NITEU</name>